<proteinExistence type="inferred from homology"/>
<evidence type="ECO:0000255" key="1">
    <source>
        <dbReference type="HAMAP-Rule" id="MF_00539"/>
    </source>
</evidence>
<evidence type="ECO:0000256" key="2">
    <source>
        <dbReference type="SAM" id="MobiDB-lite"/>
    </source>
</evidence>
<evidence type="ECO:0000305" key="3"/>
<dbReference type="EMBL" id="AP009044">
    <property type="protein sequence ID" value="BAF55250.1"/>
    <property type="molecule type" value="Genomic_DNA"/>
</dbReference>
<dbReference type="RefSeq" id="WP_003859304.1">
    <property type="nucleotide sequence ID" value="NC_009342.1"/>
</dbReference>
<dbReference type="SMR" id="A4QG84"/>
<dbReference type="GeneID" id="1020312"/>
<dbReference type="KEGG" id="cgt:cgR_2246"/>
<dbReference type="HOGENOM" id="CLU_095424_4_0_11"/>
<dbReference type="PhylomeDB" id="A4QG84"/>
<dbReference type="Proteomes" id="UP000006698">
    <property type="component" value="Chromosome"/>
</dbReference>
<dbReference type="GO" id="GO:0022625">
    <property type="term" value="C:cytosolic large ribosomal subunit"/>
    <property type="evidence" value="ECO:0007669"/>
    <property type="project" value="TreeGrafter"/>
</dbReference>
<dbReference type="GO" id="GO:0003735">
    <property type="term" value="F:structural constituent of ribosome"/>
    <property type="evidence" value="ECO:0007669"/>
    <property type="project" value="InterPro"/>
</dbReference>
<dbReference type="GO" id="GO:0006412">
    <property type="term" value="P:translation"/>
    <property type="evidence" value="ECO:0007669"/>
    <property type="project" value="UniProtKB-UniRule"/>
</dbReference>
<dbReference type="FunFam" id="2.40.50.100:FF:000020">
    <property type="entry name" value="50S ribosomal protein L27"/>
    <property type="match status" value="1"/>
</dbReference>
<dbReference type="Gene3D" id="2.40.50.100">
    <property type="match status" value="1"/>
</dbReference>
<dbReference type="HAMAP" id="MF_00539">
    <property type="entry name" value="Ribosomal_bL27"/>
    <property type="match status" value="1"/>
</dbReference>
<dbReference type="InterPro" id="IPR001684">
    <property type="entry name" value="Ribosomal_bL27"/>
</dbReference>
<dbReference type="InterPro" id="IPR018261">
    <property type="entry name" value="Ribosomal_bL27_CS"/>
</dbReference>
<dbReference type="NCBIfam" id="TIGR00062">
    <property type="entry name" value="L27"/>
    <property type="match status" value="1"/>
</dbReference>
<dbReference type="PANTHER" id="PTHR15893:SF0">
    <property type="entry name" value="LARGE RIBOSOMAL SUBUNIT PROTEIN BL27M"/>
    <property type="match status" value="1"/>
</dbReference>
<dbReference type="PANTHER" id="PTHR15893">
    <property type="entry name" value="RIBOSOMAL PROTEIN L27"/>
    <property type="match status" value="1"/>
</dbReference>
<dbReference type="Pfam" id="PF01016">
    <property type="entry name" value="Ribosomal_L27"/>
    <property type="match status" value="1"/>
</dbReference>
<dbReference type="PRINTS" id="PR00063">
    <property type="entry name" value="RIBOSOMALL27"/>
</dbReference>
<dbReference type="SUPFAM" id="SSF110324">
    <property type="entry name" value="Ribosomal L27 protein-like"/>
    <property type="match status" value="1"/>
</dbReference>
<dbReference type="PROSITE" id="PS00831">
    <property type="entry name" value="RIBOSOMAL_L27"/>
    <property type="match status" value="1"/>
</dbReference>
<organism>
    <name type="scientific">Corynebacterium glutamicum (strain R)</name>
    <dbReference type="NCBI Taxonomy" id="340322"/>
    <lineage>
        <taxon>Bacteria</taxon>
        <taxon>Bacillati</taxon>
        <taxon>Actinomycetota</taxon>
        <taxon>Actinomycetes</taxon>
        <taxon>Mycobacteriales</taxon>
        <taxon>Corynebacteriaceae</taxon>
        <taxon>Corynebacterium</taxon>
    </lineage>
</organism>
<protein>
    <recommendedName>
        <fullName evidence="1">Large ribosomal subunit protein bL27</fullName>
    </recommendedName>
    <alternativeName>
        <fullName evidence="3">50S ribosomal protein L27</fullName>
    </alternativeName>
</protein>
<gene>
    <name evidence="1" type="primary">rpmA</name>
    <name type="ordered locus">cgR_2246</name>
</gene>
<sequence length="88" mass="9441">MAHKKGASSSSNGRDSEAKRLGVKRFGGQQVSAGEILVRQRGTKFHPGENVGRGGDDTLFALKTGAVQFSTKRNRRLVNIVETEAVDA</sequence>
<comment type="similarity">
    <text evidence="1">Belongs to the bacterial ribosomal protein bL27 family.</text>
</comment>
<name>RL27_CORGB</name>
<reference key="1">
    <citation type="journal article" date="2007" name="Microbiology">
        <title>Comparative analysis of the Corynebacterium glutamicum group and complete genome sequence of strain R.</title>
        <authorList>
            <person name="Yukawa H."/>
            <person name="Omumasaba C.A."/>
            <person name="Nonaka H."/>
            <person name="Kos P."/>
            <person name="Okai N."/>
            <person name="Suzuki N."/>
            <person name="Suda M."/>
            <person name="Tsuge Y."/>
            <person name="Watanabe J."/>
            <person name="Ikeda Y."/>
            <person name="Vertes A.A."/>
            <person name="Inui M."/>
        </authorList>
    </citation>
    <scope>NUCLEOTIDE SEQUENCE [LARGE SCALE GENOMIC DNA]</scope>
    <source>
        <strain>R</strain>
    </source>
</reference>
<keyword id="KW-0687">Ribonucleoprotein</keyword>
<keyword id="KW-0689">Ribosomal protein</keyword>
<accession>A4QG84</accession>
<feature type="chain" id="PRO_1000017460" description="Large ribosomal subunit protein bL27">
    <location>
        <begin position="1"/>
        <end position="88"/>
    </location>
</feature>
<feature type="region of interest" description="Disordered" evidence="2">
    <location>
        <begin position="1"/>
        <end position="26"/>
    </location>
</feature>